<organism>
    <name type="scientific">Escherichia coli O157:H7</name>
    <dbReference type="NCBI Taxonomy" id="83334"/>
    <lineage>
        <taxon>Bacteria</taxon>
        <taxon>Pseudomonadati</taxon>
        <taxon>Pseudomonadota</taxon>
        <taxon>Gammaproteobacteria</taxon>
        <taxon>Enterobacterales</taxon>
        <taxon>Enterobacteriaceae</taxon>
        <taxon>Escherichia</taxon>
    </lineage>
</organism>
<dbReference type="EMBL" id="AE005174">
    <property type="protein sequence ID" value="AAG58540.1"/>
    <property type="molecule type" value="Genomic_DNA"/>
</dbReference>
<dbReference type="EMBL" id="BA000007">
    <property type="protein sequence ID" value="BAB37702.1"/>
    <property type="molecule type" value="Genomic_DNA"/>
</dbReference>
<dbReference type="PIR" id="G91163">
    <property type="entry name" value="G91163"/>
</dbReference>
<dbReference type="PIR" id="H86009">
    <property type="entry name" value="H86009"/>
</dbReference>
<dbReference type="RefSeq" id="NP_312306.1">
    <property type="nucleotide sequence ID" value="NC_002695.1"/>
</dbReference>
<dbReference type="RefSeq" id="WP_001002544.1">
    <property type="nucleotide sequence ID" value="NZ_VOAI01000004.1"/>
</dbReference>
<dbReference type="STRING" id="155864.Z4798"/>
<dbReference type="GeneID" id="915864"/>
<dbReference type="GeneID" id="93778555"/>
<dbReference type="KEGG" id="ece:Z4798"/>
<dbReference type="KEGG" id="ecs:ECs_4279"/>
<dbReference type="PATRIC" id="fig|386585.9.peg.4470"/>
<dbReference type="eggNOG" id="COG2095">
    <property type="taxonomic scope" value="Bacteria"/>
</dbReference>
<dbReference type="HOGENOM" id="CLU_079909_1_1_6"/>
<dbReference type="OMA" id="IRMIFPQ"/>
<dbReference type="Proteomes" id="UP000000558">
    <property type="component" value="Chromosome"/>
</dbReference>
<dbReference type="Proteomes" id="UP000002519">
    <property type="component" value="Chromosome"/>
</dbReference>
<dbReference type="GO" id="GO:0005886">
    <property type="term" value="C:plasma membrane"/>
    <property type="evidence" value="ECO:0007669"/>
    <property type="project" value="UniProtKB-SubCell"/>
</dbReference>
<dbReference type="InterPro" id="IPR002771">
    <property type="entry name" value="Multi_antbiot-R_MarC"/>
</dbReference>
<dbReference type="NCBIfam" id="TIGR00427">
    <property type="entry name" value="NAAT family transporter"/>
    <property type="match status" value="1"/>
</dbReference>
<dbReference type="NCBIfam" id="NF008010">
    <property type="entry name" value="PRK10739.1"/>
    <property type="match status" value="1"/>
</dbReference>
<dbReference type="PANTHER" id="PTHR33508:SF10">
    <property type="entry name" value="UPF0056 INNER MEMBRANE PROTEIN YHGN"/>
    <property type="match status" value="1"/>
</dbReference>
<dbReference type="PANTHER" id="PTHR33508">
    <property type="entry name" value="UPF0056 MEMBRANE PROTEIN YHCE"/>
    <property type="match status" value="1"/>
</dbReference>
<dbReference type="Pfam" id="PF01914">
    <property type="entry name" value="MarC"/>
    <property type="match status" value="1"/>
</dbReference>
<feature type="chain" id="PRO_0000156903" description="UPF0056 inner membrane protein YhgN">
    <location>
        <begin position="1"/>
        <end position="197"/>
    </location>
</feature>
<feature type="topological domain" description="Periplasmic" evidence="2">
    <location>
        <begin position="1"/>
        <end position="3"/>
    </location>
</feature>
<feature type="transmembrane region" description="Helical" evidence="2">
    <location>
        <begin position="4"/>
        <end position="24"/>
    </location>
</feature>
<feature type="topological domain" description="Cytoplasmic" evidence="2">
    <location>
        <begin position="25"/>
        <end position="44"/>
    </location>
</feature>
<feature type="transmembrane region" description="Helical" evidence="2">
    <location>
        <begin position="45"/>
        <end position="65"/>
    </location>
</feature>
<feature type="topological domain" description="Periplasmic" evidence="2">
    <location>
        <begin position="66"/>
        <end position="71"/>
    </location>
</feature>
<feature type="transmembrane region" description="Helical" evidence="2">
    <location>
        <begin position="72"/>
        <end position="92"/>
    </location>
</feature>
<feature type="topological domain" description="Cytoplasmic" evidence="2">
    <location>
        <begin position="93"/>
        <end position="105"/>
    </location>
</feature>
<feature type="transmembrane region" description="Helical" evidence="2">
    <location>
        <begin position="106"/>
        <end position="126"/>
    </location>
</feature>
<feature type="topological domain" description="Periplasmic" evidence="2">
    <location>
        <begin position="127"/>
        <end position="138"/>
    </location>
</feature>
<feature type="transmembrane region" description="Helical" evidence="2">
    <location>
        <begin position="139"/>
        <end position="159"/>
    </location>
</feature>
<feature type="topological domain" description="Cytoplasmic" evidence="2">
    <location>
        <begin position="160"/>
        <end position="173"/>
    </location>
</feature>
<feature type="transmembrane region" description="Helical" evidence="2">
    <location>
        <begin position="174"/>
        <end position="194"/>
    </location>
</feature>
<feature type="topological domain" description="Periplasmic" evidence="2">
    <location>
        <begin position="195"/>
        <end position="197"/>
    </location>
</feature>
<name>YHGN_ECO57</name>
<evidence type="ECO:0000250" key="1"/>
<evidence type="ECO:0000255" key="2"/>
<evidence type="ECO:0000305" key="3"/>
<sequence length="197" mass="21490">MNEIISAAVLLILIMDPLGNLPIFMSVLKHTEPKRRRAIMVRELLIALLVMLVFLFAGEKILAFLSLRAETVSISGGIILFLIAIKMIFPSASGNSSGLPAGEEPFIVPLAIPLVAGPTILATLMLLSHQYPNQMGHLVIALLLAWGGTFVILLQSSLFLRLLGEKGVNALERLMGLILVMMATQMFLDGIRMWMKG</sequence>
<accession>P67144</accession>
<accession>P46851</accession>
<protein>
    <recommendedName>
        <fullName>UPF0056 inner membrane protein YhgN</fullName>
    </recommendedName>
</protein>
<keyword id="KW-0997">Cell inner membrane</keyword>
<keyword id="KW-1003">Cell membrane</keyword>
<keyword id="KW-0472">Membrane</keyword>
<keyword id="KW-1185">Reference proteome</keyword>
<keyword id="KW-0812">Transmembrane</keyword>
<keyword id="KW-1133">Transmembrane helix</keyword>
<proteinExistence type="inferred from homology"/>
<gene>
    <name type="primary">yhgN</name>
    <name type="ordered locus">Z4798</name>
    <name type="ordered locus">ECs4279</name>
</gene>
<comment type="subcellular location">
    <subcellularLocation>
        <location evidence="1">Cell inner membrane</location>
        <topology evidence="1">Multi-pass membrane protein</topology>
    </subcellularLocation>
</comment>
<comment type="similarity">
    <text evidence="3">Belongs to the UPF0056 (MarC) family.</text>
</comment>
<reference key="1">
    <citation type="journal article" date="2001" name="Nature">
        <title>Genome sequence of enterohaemorrhagic Escherichia coli O157:H7.</title>
        <authorList>
            <person name="Perna N.T."/>
            <person name="Plunkett G. III"/>
            <person name="Burland V."/>
            <person name="Mau B."/>
            <person name="Glasner J.D."/>
            <person name="Rose D.J."/>
            <person name="Mayhew G.F."/>
            <person name="Evans P.S."/>
            <person name="Gregor J."/>
            <person name="Kirkpatrick H.A."/>
            <person name="Posfai G."/>
            <person name="Hackett J."/>
            <person name="Klink S."/>
            <person name="Boutin A."/>
            <person name="Shao Y."/>
            <person name="Miller L."/>
            <person name="Grotbeck E.J."/>
            <person name="Davis N.W."/>
            <person name="Lim A."/>
            <person name="Dimalanta E.T."/>
            <person name="Potamousis K."/>
            <person name="Apodaca J."/>
            <person name="Anantharaman T.S."/>
            <person name="Lin J."/>
            <person name="Yen G."/>
            <person name="Schwartz D.C."/>
            <person name="Welch R.A."/>
            <person name="Blattner F.R."/>
        </authorList>
    </citation>
    <scope>NUCLEOTIDE SEQUENCE [LARGE SCALE GENOMIC DNA]</scope>
    <source>
        <strain>O157:H7 / EDL933 / ATCC 700927 / EHEC</strain>
    </source>
</reference>
<reference key="2">
    <citation type="journal article" date="2001" name="DNA Res.">
        <title>Complete genome sequence of enterohemorrhagic Escherichia coli O157:H7 and genomic comparison with a laboratory strain K-12.</title>
        <authorList>
            <person name="Hayashi T."/>
            <person name="Makino K."/>
            <person name="Ohnishi M."/>
            <person name="Kurokawa K."/>
            <person name="Ishii K."/>
            <person name="Yokoyama K."/>
            <person name="Han C.-G."/>
            <person name="Ohtsubo E."/>
            <person name="Nakayama K."/>
            <person name="Murata T."/>
            <person name="Tanaka M."/>
            <person name="Tobe T."/>
            <person name="Iida T."/>
            <person name="Takami H."/>
            <person name="Honda T."/>
            <person name="Sasakawa C."/>
            <person name="Ogasawara N."/>
            <person name="Yasunaga T."/>
            <person name="Kuhara S."/>
            <person name="Shiba T."/>
            <person name="Hattori M."/>
            <person name="Shinagawa H."/>
        </authorList>
    </citation>
    <scope>NUCLEOTIDE SEQUENCE [LARGE SCALE GENOMIC DNA]</scope>
    <source>
        <strain>O157:H7 / Sakai / RIMD 0509952 / EHEC</strain>
    </source>
</reference>